<organism>
    <name type="scientific">Arabidopsis thaliana</name>
    <name type="common">Mouse-ear cress</name>
    <dbReference type="NCBI Taxonomy" id="3702"/>
    <lineage>
        <taxon>Eukaryota</taxon>
        <taxon>Viridiplantae</taxon>
        <taxon>Streptophyta</taxon>
        <taxon>Embryophyta</taxon>
        <taxon>Tracheophyta</taxon>
        <taxon>Spermatophyta</taxon>
        <taxon>Magnoliopsida</taxon>
        <taxon>eudicotyledons</taxon>
        <taxon>Gunneridae</taxon>
        <taxon>Pentapetalae</taxon>
        <taxon>rosids</taxon>
        <taxon>malvids</taxon>
        <taxon>Brassicales</taxon>
        <taxon>Brassicaceae</taxon>
        <taxon>Camelineae</taxon>
        <taxon>Arabidopsis</taxon>
    </lineage>
</organism>
<dbReference type="EC" id="2.7.7.7" evidence="5 7"/>
<dbReference type="EMBL" id="AJ416380">
    <property type="protein sequence ID" value="CAC94893.1"/>
    <property type="molecule type" value="mRNA"/>
</dbReference>
<dbReference type="EMBL" id="EF495196">
    <property type="protein sequence ID" value="ABP49608.1"/>
    <property type="molecule type" value="mRNA"/>
</dbReference>
<dbReference type="EMBL" id="EF495197">
    <property type="protein sequence ID" value="ABP49609.1"/>
    <property type="molecule type" value="mRNA"/>
</dbReference>
<dbReference type="EMBL" id="AY151396">
    <property type="protein sequence ID" value="AAN39011.1"/>
    <property type="molecule type" value="mRNA"/>
</dbReference>
<dbReference type="EMBL" id="AB016874">
    <property type="protein sequence ID" value="BAB08827.1"/>
    <property type="status" value="ALT_SEQ"/>
    <property type="molecule type" value="Genomic_DNA"/>
</dbReference>
<dbReference type="EMBL" id="AC002342">
    <property type="protein sequence ID" value="AAC79146.1"/>
    <property type="status" value="ALT_SEQ"/>
    <property type="molecule type" value="Genomic_DNA"/>
</dbReference>
<dbReference type="EMBL" id="CP002688">
    <property type="protein sequence ID" value="AED95154.1"/>
    <property type="molecule type" value="Genomic_DNA"/>
</dbReference>
<dbReference type="EMBL" id="CP002688">
    <property type="protein sequence ID" value="AED95155.1"/>
    <property type="molecule type" value="Genomic_DNA"/>
</dbReference>
<dbReference type="EMBL" id="AF360283">
    <property type="protein sequence ID" value="AAK25993.1"/>
    <property type="molecule type" value="mRNA"/>
</dbReference>
<dbReference type="EMBL" id="AY113879">
    <property type="protein sequence ID" value="AAM44927.1"/>
    <property type="molecule type" value="mRNA"/>
</dbReference>
<dbReference type="RefSeq" id="NP_568638.2">
    <molecule id="Q8H2D5-1"/>
    <property type="nucleotide sequence ID" value="NM_123841.5"/>
</dbReference>
<dbReference type="RefSeq" id="NP_851130.1">
    <molecule id="Q8H2D5-2"/>
    <property type="nucleotide sequence ID" value="NM_180799.2"/>
</dbReference>
<dbReference type="SMR" id="Q8H2D5"/>
<dbReference type="BioGRID" id="19753">
    <property type="interactions" value="3"/>
</dbReference>
<dbReference type="FunCoup" id="Q8H2D5">
    <property type="interactions" value="3465"/>
</dbReference>
<dbReference type="IntAct" id="Q8H2D5">
    <property type="interactions" value="3"/>
</dbReference>
<dbReference type="STRING" id="3702.Q8H2D5"/>
<dbReference type="GlyGen" id="Q8H2D5">
    <property type="glycosylation" value="1 site"/>
</dbReference>
<dbReference type="PaxDb" id="3702-AT5G44740.2"/>
<dbReference type="ProteomicsDB" id="234857">
    <molecule id="Q8H2D5-1"/>
</dbReference>
<dbReference type="EnsemblPlants" id="AT5G44740.1">
    <molecule id="Q8H2D5-2"/>
    <property type="protein sequence ID" value="AT5G44740.1"/>
    <property type="gene ID" value="AT5G44740"/>
</dbReference>
<dbReference type="EnsemblPlants" id="AT5G44740.2">
    <molecule id="Q8H2D5-1"/>
    <property type="protein sequence ID" value="AT5G44740.2"/>
    <property type="gene ID" value="AT5G44740"/>
</dbReference>
<dbReference type="GeneID" id="834503"/>
<dbReference type="Gramene" id="AT5G44740.1">
    <molecule id="Q8H2D5-2"/>
    <property type="protein sequence ID" value="AT5G44740.1"/>
    <property type="gene ID" value="AT5G44740"/>
</dbReference>
<dbReference type="Gramene" id="AT5G44740.2">
    <molecule id="Q8H2D5-1"/>
    <property type="protein sequence ID" value="AT5G44740.2"/>
    <property type="gene ID" value="AT5G44740"/>
</dbReference>
<dbReference type="KEGG" id="ath:AT5G44740"/>
<dbReference type="Araport" id="AT5G44740"/>
<dbReference type="TAIR" id="AT5G44740">
    <property type="gene designation" value="POLH"/>
</dbReference>
<dbReference type="eggNOG" id="KOG2095">
    <property type="taxonomic scope" value="Eukaryota"/>
</dbReference>
<dbReference type="HOGENOM" id="CLU_012348_7_2_1"/>
<dbReference type="InParanoid" id="Q8H2D5"/>
<dbReference type="OMA" id="YARACKK"/>
<dbReference type="OrthoDB" id="5723at2759"/>
<dbReference type="PhylomeDB" id="Q8H2D5"/>
<dbReference type="PRO" id="PR:Q8H2D5"/>
<dbReference type="Proteomes" id="UP000006548">
    <property type="component" value="Chromosome 5"/>
</dbReference>
<dbReference type="ExpressionAtlas" id="Q8H2D5">
    <property type="expression patterns" value="baseline and differential"/>
</dbReference>
<dbReference type="GO" id="GO:0005634">
    <property type="term" value="C:nucleus"/>
    <property type="evidence" value="ECO:0007669"/>
    <property type="project" value="UniProtKB-SubCell"/>
</dbReference>
<dbReference type="GO" id="GO:0003684">
    <property type="term" value="F:damaged DNA binding"/>
    <property type="evidence" value="ECO:0007669"/>
    <property type="project" value="InterPro"/>
</dbReference>
<dbReference type="GO" id="GO:0003887">
    <property type="term" value="F:DNA-directed DNA polymerase activity"/>
    <property type="evidence" value="ECO:0000314"/>
    <property type="project" value="TAIR"/>
</dbReference>
<dbReference type="GO" id="GO:0046872">
    <property type="term" value="F:metal ion binding"/>
    <property type="evidence" value="ECO:0007669"/>
    <property type="project" value="UniProtKB-KW"/>
</dbReference>
<dbReference type="GO" id="GO:0006260">
    <property type="term" value="P:DNA replication"/>
    <property type="evidence" value="ECO:0007669"/>
    <property type="project" value="UniProtKB-KW"/>
</dbReference>
<dbReference type="GO" id="GO:0042276">
    <property type="term" value="P:error-prone translesion synthesis"/>
    <property type="evidence" value="ECO:0000314"/>
    <property type="project" value="TAIR"/>
</dbReference>
<dbReference type="GO" id="GO:0010224">
    <property type="term" value="P:response to UV-B"/>
    <property type="evidence" value="ECO:0000315"/>
    <property type="project" value="TAIR"/>
</dbReference>
<dbReference type="GO" id="GO:0009650">
    <property type="term" value="P:UV protection"/>
    <property type="evidence" value="ECO:0000316"/>
    <property type="project" value="UniProtKB"/>
</dbReference>
<dbReference type="CDD" id="cd01702">
    <property type="entry name" value="PolY_Pol_eta"/>
    <property type="match status" value="1"/>
</dbReference>
<dbReference type="FunFam" id="3.30.1490.100:FF:000006">
    <property type="entry name" value="DNA polymerase eta"/>
    <property type="match status" value="1"/>
</dbReference>
<dbReference type="FunFam" id="3.30.70.270:FF:000029">
    <property type="entry name" value="DNA polymerase eta"/>
    <property type="match status" value="1"/>
</dbReference>
<dbReference type="FunFam" id="3.40.1170.60:FF:000003">
    <property type="entry name" value="DNA polymerase eta"/>
    <property type="match status" value="1"/>
</dbReference>
<dbReference type="FunFam" id="1.10.150.20:FF:000014">
    <property type="entry name" value="Polymerase (DNA directed), eta"/>
    <property type="match status" value="1"/>
</dbReference>
<dbReference type="Gene3D" id="3.30.70.270">
    <property type="match status" value="1"/>
</dbReference>
<dbReference type="Gene3D" id="3.40.1170.60">
    <property type="match status" value="1"/>
</dbReference>
<dbReference type="Gene3D" id="6.10.250.1630">
    <property type="match status" value="1"/>
</dbReference>
<dbReference type="Gene3D" id="1.10.150.20">
    <property type="entry name" value="5' to 3' exonuclease, C-terminal subdomain"/>
    <property type="match status" value="1"/>
</dbReference>
<dbReference type="Gene3D" id="3.30.1490.100">
    <property type="entry name" value="DNA polymerase, Y-family, little finger domain"/>
    <property type="match status" value="1"/>
</dbReference>
<dbReference type="InterPro" id="IPR043502">
    <property type="entry name" value="DNA/RNA_pol_sf"/>
</dbReference>
<dbReference type="InterPro" id="IPR036775">
    <property type="entry name" value="DNA_pol_Y-fam_lit_finger_sf"/>
</dbReference>
<dbReference type="InterPro" id="IPR017961">
    <property type="entry name" value="DNA_pol_Y-fam_little_finger"/>
</dbReference>
<dbReference type="InterPro" id="IPR052230">
    <property type="entry name" value="DNA_polymerase_eta"/>
</dbReference>
<dbReference type="InterPro" id="IPR043128">
    <property type="entry name" value="Rev_trsase/Diguanyl_cyclase"/>
</dbReference>
<dbReference type="InterPro" id="IPR001126">
    <property type="entry name" value="UmuC"/>
</dbReference>
<dbReference type="PANTHER" id="PTHR45873">
    <property type="entry name" value="DNA POLYMERASE ETA"/>
    <property type="match status" value="1"/>
</dbReference>
<dbReference type="PANTHER" id="PTHR45873:SF1">
    <property type="entry name" value="DNA POLYMERASE ETA"/>
    <property type="match status" value="1"/>
</dbReference>
<dbReference type="Pfam" id="PF00817">
    <property type="entry name" value="IMS"/>
    <property type="match status" value="1"/>
</dbReference>
<dbReference type="Pfam" id="PF11799">
    <property type="entry name" value="IMS_C"/>
    <property type="match status" value="1"/>
</dbReference>
<dbReference type="Pfam" id="PF21704">
    <property type="entry name" value="POLH-Rev1_HhH"/>
    <property type="match status" value="1"/>
</dbReference>
<dbReference type="PIRSF" id="PIRSF036603">
    <property type="entry name" value="DPol_eta"/>
    <property type="match status" value="1"/>
</dbReference>
<dbReference type="SUPFAM" id="SSF56672">
    <property type="entry name" value="DNA/RNA polymerases"/>
    <property type="match status" value="1"/>
</dbReference>
<dbReference type="SUPFAM" id="SSF100879">
    <property type="entry name" value="Lesion bypass DNA polymerase (Y-family), little finger domain"/>
    <property type="match status" value="1"/>
</dbReference>
<dbReference type="PROSITE" id="PS50173">
    <property type="entry name" value="UMUC"/>
    <property type="match status" value="1"/>
</dbReference>
<reference key="1">
    <citation type="submission" date="2001-10" db="EMBL/GenBank/DDBJ databases">
        <title>A DNA polymerase homolog in the model plant Arabidopsis thaliana.</title>
        <authorList>
            <person name="Alejandre-Duran E."/>
            <person name="Ariza R.R."/>
            <person name="Roldan-Arjona T."/>
            <person name="Ruiz-Rubio M."/>
        </authorList>
    </citation>
    <scope>NUCLEOTIDE SEQUENCE [MRNA] (ISOFORM 1)</scope>
</reference>
<reference key="2">
    <citation type="journal article" date="2006" name="Mutat. Res.">
        <title>Analysis of UV-induced mutation spectra in Escherichia coli by DNA polymerase eta from Arabidopsis thaliana.</title>
        <authorList>
            <person name="Santiago M.J."/>
            <person name="Alejandre-Duran E."/>
            <person name="Ruiz-Rubio M."/>
        </authorList>
    </citation>
    <scope>NUCLEOTIDE SEQUENCE [MRNA] (ISOFORMS 3 AND 4)</scope>
    <scope>FUNCTION IN UV PROTECTION</scope>
    <scope>MUTAGENESIS OF 120-ASP--VAL-122</scope>
    <scope>CATALYTIC ACTIVITY</scope>
    <scope>TISSUE SPECIFICITY</scope>
    <source>
        <strain>cv. Columbia</strain>
    </source>
</reference>
<reference key="3">
    <citation type="journal article" date="2008" name="Plant J.">
        <title>Arabidopsis thaliana Y-family DNA polymerase eta catalyses translesion synthesis and interacts functionally with PCNA2.</title>
        <authorList>
            <person name="Anderson H.J."/>
            <person name="Vonarx E.J."/>
            <person name="Pastushok L."/>
            <person name="Nakagawa M."/>
            <person name="Katafuchi A."/>
            <person name="Gruz P."/>
            <person name="Di Rubbo A."/>
            <person name="Grice D.M."/>
            <person name="Osmond M.J."/>
            <person name="Sakamoto A.N."/>
            <person name="Nohmi T."/>
            <person name="Xiao W."/>
            <person name="Kunz B.A."/>
        </authorList>
    </citation>
    <scope>NUCLEOTIDE SEQUENCE [MRNA] (ISOFORM 1)</scope>
    <scope>FUNCTION IN TRANSLESION</scope>
    <scope>DISRUPTION PHENOTYPE</scope>
    <scope>INTERACTION WITH PCNA1 AND PCNA2</scope>
</reference>
<reference key="4">
    <citation type="journal article" date="1998" name="DNA Res.">
        <title>Structural analysis of Arabidopsis thaliana chromosome 5. VIII. Sequence features of the regions of 1,081,958 bp covered by seventeen physically assigned P1 and TAC clones.</title>
        <authorList>
            <person name="Asamizu E."/>
            <person name="Sato S."/>
            <person name="Kaneko T."/>
            <person name="Nakamura Y."/>
            <person name="Kotani H."/>
            <person name="Miyajima N."/>
            <person name="Tabata S."/>
        </authorList>
    </citation>
    <scope>NUCLEOTIDE SEQUENCE [LARGE SCALE GENOMIC DNA]</scope>
    <source>
        <strain>cv. Columbia</strain>
    </source>
</reference>
<reference key="5">
    <citation type="journal article" date="2000" name="Nature">
        <title>Sequence and analysis of chromosome 5 of the plant Arabidopsis thaliana.</title>
        <authorList>
            <person name="Tabata S."/>
            <person name="Kaneko T."/>
            <person name="Nakamura Y."/>
            <person name="Kotani H."/>
            <person name="Kato T."/>
            <person name="Asamizu E."/>
            <person name="Miyajima N."/>
            <person name="Sasamoto S."/>
            <person name="Kimura T."/>
            <person name="Hosouchi T."/>
            <person name="Kawashima K."/>
            <person name="Kohara M."/>
            <person name="Matsumoto M."/>
            <person name="Matsuno A."/>
            <person name="Muraki A."/>
            <person name="Nakayama S."/>
            <person name="Nakazaki N."/>
            <person name="Naruo K."/>
            <person name="Okumura S."/>
            <person name="Shinpo S."/>
            <person name="Takeuchi C."/>
            <person name="Wada T."/>
            <person name="Watanabe A."/>
            <person name="Yamada M."/>
            <person name="Yasuda M."/>
            <person name="Sato S."/>
            <person name="de la Bastide M."/>
            <person name="Huang E."/>
            <person name="Spiegel L."/>
            <person name="Gnoj L."/>
            <person name="O'Shaughnessy A."/>
            <person name="Preston R."/>
            <person name="Habermann K."/>
            <person name="Murray J."/>
            <person name="Johnson D."/>
            <person name="Rohlfing T."/>
            <person name="Nelson J."/>
            <person name="Stoneking T."/>
            <person name="Pepin K."/>
            <person name="Spieth J."/>
            <person name="Sekhon M."/>
            <person name="Armstrong J."/>
            <person name="Becker M."/>
            <person name="Belter E."/>
            <person name="Cordum H."/>
            <person name="Cordes M."/>
            <person name="Courtney L."/>
            <person name="Courtney W."/>
            <person name="Dante M."/>
            <person name="Du H."/>
            <person name="Edwards J."/>
            <person name="Fryman J."/>
            <person name="Haakensen B."/>
            <person name="Lamar E."/>
            <person name="Latreille P."/>
            <person name="Leonard S."/>
            <person name="Meyer R."/>
            <person name="Mulvaney E."/>
            <person name="Ozersky P."/>
            <person name="Riley A."/>
            <person name="Strowmatt C."/>
            <person name="Wagner-McPherson C."/>
            <person name="Wollam A."/>
            <person name="Yoakum M."/>
            <person name="Bell M."/>
            <person name="Dedhia N."/>
            <person name="Parnell L."/>
            <person name="Shah R."/>
            <person name="Rodriguez M."/>
            <person name="Hoon See L."/>
            <person name="Vil D."/>
            <person name="Baker J."/>
            <person name="Kirchoff K."/>
            <person name="Toth K."/>
            <person name="King L."/>
            <person name="Bahret A."/>
            <person name="Miller B."/>
            <person name="Marra M.A."/>
            <person name="Martienssen R."/>
            <person name="McCombie W.R."/>
            <person name="Wilson R.K."/>
            <person name="Murphy G."/>
            <person name="Bancroft I."/>
            <person name="Volckaert G."/>
            <person name="Wambutt R."/>
            <person name="Duesterhoeft A."/>
            <person name="Stiekema W."/>
            <person name="Pohl T."/>
            <person name="Entian K.-D."/>
            <person name="Terryn N."/>
            <person name="Hartley N."/>
            <person name="Bent E."/>
            <person name="Johnson S."/>
            <person name="Langham S.-A."/>
            <person name="McCullagh B."/>
            <person name="Robben J."/>
            <person name="Grymonprez B."/>
            <person name="Zimmermann W."/>
            <person name="Ramsperger U."/>
            <person name="Wedler H."/>
            <person name="Balke K."/>
            <person name="Wedler E."/>
            <person name="Peters S."/>
            <person name="van Staveren M."/>
            <person name="Dirkse W."/>
            <person name="Mooijman P."/>
            <person name="Klein Lankhorst R."/>
            <person name="Weitzenegger T."/>
            <person name="Bothe G."/>
            <person name="Rose M."/>
            <person name="Hauf J."/>
            <person name="Berneiser S."/>
            <person name="Hempel S."/>
            <person name="Feldpausch M."/>
            <person name="Lamberth S."/>
            <person name="Villarroel R."/>
            <person name="Gielen J."/>
            <person name="Ardiles W."/>
            <person name="Bents O."/>
            <person name="Lemcke K."/>
            <person name="Kolesov G."/>
            <person name="Mayer K.F.X."/>
            <person name="Rudd S."/>
            <person name="Schoof H."/>
            <person name="Schueller C."/>
            <person name="Zaccaria P."/>
            <person name="Mewes H.-W."/>
            <person name="Bevan M."/>
            <person name="Fransz P.F."/>
        </authorList>
    </citation>
    <scope>NUCLEOTIDE SEQUENCE [LARGE SCALE GENOMIC DNA]</scope>
    <source>
        <strain>cv. Columbia</strain>
    </source>
</reference>
<reference key="6">
    <citation type="journal article" date="2017" name="Plant J.">
        <title>Araport11: a complete reannotation of the Arabidopsis thaliana reference genome.</title>
        <authorList>
            <person name="Cheng C.Y."/>
            <person name="Krishnakumar V."/>
            <person name="Chan A.P."/>
            <person name="Thibaud-Nissen F."/>
            <person name="Schobel S."/>
            <person name="Town C.D."/>
        </authorList>
    </citation>
    <scope>GENOME REANNOTATION</scope>
    <source>
        <strain>cv. Columbia</strain>
    </source>
</reference>
<reference key="7">
    <citation type="journal article" date="2003" name="Science">
        <title>Empirical analysis of transcriptional activity in the Arabidopsis genome.</title>
        <authorList>
            <person name="Yamada K."/>
            <person name="Lim J."/>
            <person name="Dale J.M."/>
            <person name="Chen H."/>
            <person name="Shinn P."/>
            <person name="Palm C.J."/>
            <person name="Southwick A.M."/>
            <person name="Wu H.C."/>
            <person name="Kim C.J."/>
            <person name="Nguyen M."/>
            <person name="Pham P.K."/>
            <person name="Cheuk R.F."/>
            <person name="Karlin-Newmann G."/>
            <person name="Liu S.X."/>
            <person name="Lam B."/>
            <person name="Sakano H."/>
            <person name="Wu T."/>
            <person name="Yu G."/>
            <person name="Miranda M."/>
            <person name="Quach H.L."/>
            <person name="Tripp M."/>
            <person name="Chang C.H."/>
            <person name="Lee J.M."/>
            <person name="Toriumi M.J."/>
            <person name="Chan M.M."/>
            <person name="Tang C.C."/>
            <person name="Onodera C.S."/>
            <person name="Deng J.M."/>
            <person name="Akiyama K."/>
            <person name="Ansari Y."/>
            <person name="Arakawa T."/>
            <person name="Banh J."/>
            <person name="Banno F."/>
            <person name="Bowser L."/>
            <person name="Brooks S.Y."/>
            <person name="Carninci P."/>
            <person name="Chao Q."/>
            <person name="Choy N."/>
            <person name="Enju A."/>
            <person name="Goldsmith A.D."/>
            <person name="Gurjal M."/>
            <person name="Hansen N.F."/>
            <person name="Hayashizaki Y."/>
            <person name="Johnson-Hopson C."/>
            <person name="Hsuan V.W."/>
            <person name="Iida K."/>
            <person name="Karnes M."/>
            <person name="Khan S."/>
            <person name="Koesema E."/>
            <person name="Ishida J."/>
            <person name="Jiang P.X."/>
            <person name="Jones T."/>
            <person name="Kawai J."/>
            <person name="Kamiya A."/>
            <person name="Meyers C."/>
            <person name="Nakajima M."/>
            <person name="Narusaka M."/>
            <person name="Seki M."/>
            <person name="Sakurai T."/>
            <person name="Satou M."/>
            <person name="Tamse R."/>
            <person name="Vaysberg M."/>
            <person name="Wallender E.K."/>
            <person name="Wong C."/>
            <person name="Yamamura Y."/>
            <person name="Yuan S."/>
            <person name="Shinozaki K."/>
            <person name="Davis R.W."/>
            <person name="Theologis A."/>
            <person name="Ecker J.R."/>
        </authorList>
    </citation>
    <scope>NUCLEOTIDE SEQUENCE [LARGE SCALE MRNA] (ISOFORM 2)</scope>
    <source>
        <strain>cv. Columbia</strain>
    </source>
</reference>
<reference key="8">
    <citation type="journal article" date="2005" name="Environ. Mol. Mutagen.">
        <title>Components of nucleotide excision repair and DNA damage tolerance in Arabidopsis thaliana.</title>
        <authorList>
            <person name="Kunz B.A."/>
            <person name="Anderson H.J."/>
            <person name="Osmond M.J."/>
            <person name="Vonarx E.J."/>
        </authorList>
    </citation>
    <scope>REVIEW</scope>
</reference>
<reference key="9">
    <citation type="journal article" date="2008" name="Biochemistry">
        <title>Biochemical evolution of DNA polymerase eta: properties of plant, human, and yeast proteins.</title>
        <authorList>
            <person name="Hoffman P.D."/>
            <person name="Curtis M.J."/>
            <person name="Iwai S."/>
            <person name="Hays J.B."/>
        </authorList>
    </citation>
    <scope>FUNCTION</scope>
    <scope>BIOPHYSICOCHEMICAL PROPERTIES</scope>
    <scope>CATALYTIC ACTIVITY</scope>
</reference>
<reference key="10">
    <citation type="journal article" date="2008" name="J. Plant Physiol.">
        <title>Two translesion synthesis DNA polymerase genes, AtPOLH and AtREV1, are involved in development and UV light resistance in Arabidopsis.</title>
        <authorList>
            <person name="Jesus Santiago M."/>
            <person name="Alejandre-Duran E."/>
            <person name="Munoz-Serrano A."/>
            <person name="Ruiz-Rubio M."/>
        </authorList>
    </citation>
    <scope>FUNCTION</scope>
    <scope>DISRUPTION PHENOTYPE</scope>
    <source>
        <strain>cv. Columbia</strain>
    </source>
</reference>
<reference key="11">
    <citation type="journal article" date="2011" name="DNA Repair">
        <title>Cooperative responses of DNA-damage-activated protein kinases ATR and ATM and DNA translesion polymerases to replication-blocking DNA damage in a stem-cell niche.</title>
        <authorList>
            <person name="Curtis M.J."/>
            <person name="Hays J.B."/>
        </authorList>
    </citation>
    <scope>FUNCTION</scope>
    <scope>DISRUPTION PHENOTYPE</scope>
</reference>
<reference key="12">
    <citation type="journal article" date="2011" name="Plant Physiol.">
        <title>Role of AtPolzeta, AtRev1, and AtPoleta in UV light-induced mutagenesis in Arabidopsis.</title>
        <authorList>
            <person name="Nakagawa M."/>
            <person name="Takahashi S."/>
            <person name="Tanaka A."/>
            <person name="Narumi I."/>
            <person name="Sakamoto A.N."/>
        </authorList>
    </citation>
    <scope>FUNCTION</scope>
    <scope>DISRUPTION PHENOTYPE</scope>
</reference>
<reference key="13">
    <citation type="journal article" date="2011" name="Plant Signal. Behav.">
        <title>Role of AtPolzeta, AtRev1 and AtPoleta in gamma ray-induced mutagenesis.</title>
        <authorList>
            <person name="Nakagawa M."/>
            <person name="Takahashi S."/>
            <person name="Narumi I."/>
            <person name="Sakamoto A.N."/>
        </authorList>
    </citation>
    <scope>FUNCTION</scope>
    <scope>DISRUPTION PHENOTYPE</scope>
</reference>
<comment type="function">
    <text evidence="5 6 7 8 9 10 11">Error-free DNA polymerase specifically involved in DNA repair. Plays an important role in translesion synthesis (TLS), where the normal high fidelity DNA polymerases cannot proceed and DNA synthesis stalls. Plays an important role in the repair of UV-induced pyrimidine dimers and confers resistance to ultraviolet light. Depending on the context, it inserts the correct base, but may cause base transitions and transversions. Forms a Schiff base with 5'-deoxyribose phosphate at abasic sites, but does not have lyase activity. Targets POLI to replication foci. Exhibits cyclobutane dimer nonmutagenic bypass activity in vitro.</text>
</comment>
<comment type="catalytic activity">
    <reaction evidence="5 7">
        <text>DNA(n) + a 2'-deoxyribonucleoside 5'-triphosphate = DNA(n+1) + diphosphate</text>
        <dbReference type="Rhea" id="RHEA:22508"/>
        <dbReference type="Rhea" id="RHEA-COMP:17339"/>
        <dbReference type="Rhea" id="RHEA-COMP:17340"/>
        <dbReference type="ChEBI" id="CHEBI:33019"/>
        <dbReference type="ChEBI" id="CHEBI:61560"/>
        <dbReference type="ChEBI" id="CHEBI:173112"/>
        <dbReference type="EC" id="2.7.7.7"/>
    </reaction>
</comment>
<comment type="cofactor">
    <cofactor evidence="2">
        <name>Mg(2+)</name>
        <dbReference type="ChEBI" id="CHEBI:18420"/>
    </cofactor>
    <cofactor evidence="2">
        <name>Mn(2+)</name>
        <dbReference type="ChEBI" id="CHEBI:29035"/>
    </cofactor>
    <text evidence="2">Binds 2 Mg(2+). Prefers Mg(2+), but can also use Mn(2+). In vitro, can also utilize other divalent cations such as Ca(2+).</text>
</comment>
<comment type="activity regulation">
    <text evidence="2">The enzyme in complex with the DNA substrate binds a third divalent metal cation. The binding of this third divalent cation, which is coordinated by water molecules and two oxygen atoms from DNA and dNTP, is essential for catalyzing the DNA synthesis.</text>
</comment>
<comment type="biophysicochemical properties">
    <temperatureDependence>
        <text evidence="7">Optimum temperature is 22 degrees Celsius.</text>
    </temperatureDependence>
</comment>
<comment type="subunit">
    <text evidence="8">Interacts with PCNA1 and PCNA2. The interaction with PCNA2 is required for translesion synthesis (TLS) to repair UV photoproducts.</text>
</comment>
<comment type="interaction">
    <interactant intactId="EBI-1810451">
        <id>Q8H2D5</id>
    </interactant>
    <interactant intactId="EBI-1810458">
        <id>Q9M7Q7</id>
        <label>PCNA</label>
    </interactant>
    <organismsDiffer>false</organismsDiffer>
    <experiments>2</experiments>
</comment>
<comment type="interaction">
    <interactant intactId="EBI-1810451">
        <id>Q8H2D5</id>
    </interactant>
    <interactant intactId="EBI-1810473">
        <id>Q9ZW35</id>
        <label>PCNA2</label>
    </interactant>
    <organismsDiffer>false</organismsDiffer>
    <experiments>2</experiments>
</comment>
<comment type="subcellular location">
    <subcellularLocation>
        <location evidence="1">Nucleus</location>
    </subcellularLocation>
    <text evidence="1">Accumulates at replication forks after DNA damage.</text>
</comment>
<comment type="alternative products">
    <event type="alternative splicing"/>
    <isoform>
        <id>Q8H2D5-1</id>
        <name>1</name>
        <sequence type="displayed"/>
    </isoform>
    <isoform>
        <id>Q8H2D5-2</id>
        <name>2</name>
        <sequence type="described" ref="VSP_046623"/>
    </isoform>
    <isoform>
        <id>Q8H2D5-3</id>
        <name>3</name>
        <sequence type="described" ref="VSP_046626 VSP_046627"/>
    </isoform>
    <isoform>
        <id>Q8H2D5-4</id>
        <name>4</name>
        <sequence type="described" ref="VSP_046624 VSP_046625"/>
    </isoform>
</comment>
<comment type="tissue specificity">
    <text evidence="5">Constitutively expressed in roots, stems, leaves, flowers and siliques.</text>
</comment>
<comment type="domain">
    <text evidence="2">The catalytic core consists of fingers, palm and thumb subdomains, but the fingers and thumb subdomains are much smaller than in high-fidelity polymerases; residues from five sequence motifs of the Y-family cluster around an active site cleft that can accommodate DNA and nucleotide substrates with relaxed geometric constraints, with consequently higher rates of misincorporation and low processivity.</text>
</comment>
<comment type="disruption phenotype">
    <text evidence="6 8 9 10 11">Enhanced sensitivity to UV radiation accompanied by an increased mutation frequency. Shorter root and stem growth.</text>
</comment>
<comment type="similarity">
    <text evidence="14">Belongs to the DNA polymerase type-Y family.</text>
</comment>
<comment type="sequence caution" evidence="14">
    <conflict type="erroneous gene model prediction">
        <sequence resource="EMBL-CDS" id="AAC79146"/>
    </conflict>
</comment>
<comment type="sequence caution" evidence="14">
    <conflict type="erroneous gene model prediction">
        <sequence resource="EMBL-CDS" id="BAB08827"/>
    </conflict>
</comment>
<sequence>MPVARPEASDARVIAHVDMDCFYVQVEQRKQPELRGLPSAVVQYNEWQGGGLIAVSYEARKCGVKRSMRGDEAKAACPQIQLVQVPVARGKADLNLYRSAGSEVVSILAKSGKCERASIDEVYLDLTDAAESMLADAPPESLELIDEEVLKSHILGMNREDGDDFKESVRNWICREDADRRDKLLSCGIIIVAELRKQVLKETEFTCSAGIAHNKMLAKLASGMNKPAQQTVVPYAAVQELLSSLPIKKMKQLGGKLGTSLQTDLGVDTVGDLLQFSETKLQEHYGVNTGTWLWNIARGISGEEVQGRLLPKSHGSGKTFPGPRALKSLSTVQHWLNQLSEELSERLGSDLEQNKRIASTLTLHASAFRSKDSDSHKKFPSKSCPMRYGVTKIQEDAFNLFQAALREYMGSFGIKPQGNKLETWRITGLSVSASKIVDIPSGTSSIMRYFQSQPTVPSRSADGCVQGNVAMTASASEGCSEQRSTETQAAMPEVDTGVTYTLPNFENQDKDIDLVSEKDVVSCPSNEATDVSTQSESNKGTQTKKIGRKMNNSKEKNRGMPSIVDIFKNYNATPPSKQETQEDSTVSSASKRAKLSSSSHNSQVNQEVEESRETDWGYKTDEIDQSVFDELPVEIQRELRSFLRTNKQFNTGKSKGDGSTSSIAHYFPPLNR</sequence>
<accession>Q8H2D5</accession>
<accession>A4ZYA7</accession>
<accession>A4ZYA8</accession>
<accession>O48586</accession>
<accession>Q8H1C5</accession>
<accession>Q9C5F5</accession>
<protein>
    <recommendedName>
        <fullName>DNA polymerase eta</fullName>
        <ecNumber evidence="5 7">2.7.7.7</ecNumber>
    </recommendedName>
    <alternativeName>
        <fullName>Radiation-sensitive protein 30</fullName>
        <shortName>AtRAD30</shortName>
    </alternativeName>
    <alternativeName>
        <fullName>Y-family DNA polymerase H</fullName>
        <shortName>AtPOLH</shortName>
    </alternativeName>
</protein>
<evidence type="ECO:0000250" key="1"/>
<evidence type="ECO:0000250" key="2">
    <source>
        <dbReference type="UniProtKB" id="Q9Y253"/>
    </source>
</evidence>
<evidence type="ECO:0000255" key="3">
    <source>
        <dbReference type="PROSITE-ProRule" id="PRU00216"/>
    </source>
</evidence>
<evidence type="ECO:0000256" key="4">
    <source>
        <dbReference type="SAM" id="MobiDB-lite"/>
    </source>
</evidence>
<evidence type="ECO:0000269" key="5">
    <source>
    </source>
</evidence>
<evidence type="ECO:0000269" key="6">
    <source>
    </source>
</evidence>
<evidence type="ECO:0000269" key="7">
    <source>
    </source>
</evidence>
<evidence type="ECO:0000269" key="8">
    <source>
    </source>
</evidence>
<evidence type="ECO:0000269" key="9">
    <source>
    </source>
</evidence>
<evidence type="ECO:0000269" key="10">
    <source>
    </source>
</evidence>
<evidence type="ECO:0000269" key="11">
    <source>
    </source>
</evidence>
<evidence type="ECO:0000303" key="12">
    <source>
    </source>
</evidence>
<evidence type="ECO:0000303" key="13">
    <source>
    </source>
</evidence>
<evidence type="ECO:0000305" key="14"/>
<feature type="chain" id="PRO_0000422771" description="DNA polymerase eta">
    <location>
        <begin position="1"/>
        <end position="672"/>
    </location>
</feature>
<feature type="domain" description="UmuC" evidence="3">
    <location>
        <begin position="14"/>
        <end position="254"/>
    </location>
</feature>
<feature type="region of interest" description="DNA-binding" evidence="1">
    <location>
        <begin position="318"/>
        <end position="325"/>
    </location>
</feature>
<feature type="region of interest" description="DNA-binding" evidence="1">
    <location>
        <begin position="362"/>
        <end position="383"/>
    </location>
</feature>
<feature type="region of interest" description="Disordered" evidence="4">
    <location>
        <begin position="521"/>
        <end position="617"/>
    </location>
</feature>
<feature type="region of interest" description="Disordered" evidence="4">
    <location>
        <begin position="648"/>
        <end position="672"/>
    </location>
</feature>
<feature type="compositionally biased region" description="Polar residues" evidence="4">
    <location>
        <begin position="523"/>
        <end position="544"/>
    </location>
</feature>
<feature type="compositionally biased region" description="Polar residues" evidence="4">
    <location>
        <begin position="570"/>
        <end position="586"/>
    </location>
</feature>
<feature type="compositionally biased region" description="Low complexity" evidence="4">
    <location>
        <begin position="587"/>
        <end position="602"/>
    </location>
</feature>
<feature type="compositionally biased region" description="Low complexity" evidence="4">
    <location>
        <begin position="651"/>
        <end position="662"/>
    </location>
</feature>
<feature type="active site" description="Proton acceptor" evidence="3">
    <location>
        <position position="121"/>
    </location>
</feature>
<feature type="binding site" evidence="2">
    <location>
        <position position="18"/>
    </location>
    <ligand>
        <name>Mg(2+)</name>
        <dbReference type="ChEBI" id="CHEBI:18420"/>
        <label>1</label>
    </ligand>
</feature>
<feature type="binding site" evidence="2">
    <location>
        <position position="18"/>
    </location>
    <ligand>
        <name>Mg(2+)</name>
        <dbReference type="ChEBI" id="CHEBI:18420"/>
        <label>2</label>
    </ligand>
</feature>
<feature type="binding site" evidence="2">
    <location>
        <position position="18"/>
    </location>
    <ligand>
        <name>Mn(2+)</name>
        <dbReference type="ChEBI" id="CHEBI:29035"/>
        <label>1</label>
    </ligand>
</feature>
<feature type="binding site" evidence="2">
    <location>
        <position position="18"/>
    </location>
    <ligand>
        <name>Mn(2+)</name>
        <dbReference type="ChEBI" id="CHEBI:29035"/>
        <label>2</label>
    </ligand>
</feature>
<feature type="binding site" evidence="2">
    <location>
        <position position="19"/>
    </location>
    <ligand>
        <name>Mg(2+)</name>
        <dbReference type="ChEBI" id="CHEBI:18420"/>
        <label>1</label>
    </ligand>
</feature>
<feature type="binding site" evidence="2">
    <location>
        <position position="19"/>
    </location>
    <ligand>
        <name>Mn(2+)</name>
        <dbReference type="ChEBI" id="CHEBI:29035"/>
        <label>1</label>
    </ligand>
</feature>
<feature type="binding site" evidence="1">
    <location>
        <position position="23"/>
    </location>
    <ligand>
        <name>a 2'-deoxyribonucleoside 5'-triphosphate</name>
        <dbReference type="ChEBI" id="CHEBI:61560"/>
    </ligand>
</feature>
<feature type="binding site" evidence="1">
    <location>
        <position position="60"/>
    </location>
    <ligand>
        <name>a 2'-deoxyribonucleoside 5'-triphosphate</name>
        <dbReference type="ChEBI" id="CHEBI:61560"/>
    </ligand>
</feature>
<feature type="binding site" evidence="2">
    <location>
        <position position="120"/>
    </location>
    <ligand>
        <name>Mg(2+)</name>
        <dbReference type="ChEBI" id="CHEBI:18420"/>
        <label>1</label>
    </ligand>
</feature>
<feature type="binding site" evidence="2">
    <location>
        <position position="120"/>
    </location>
    <ligand>
        <name>Mg(2+)</name>
        <dbReference type="ChEBI" id="CHEBI:18420"/>
        <label>2</label>
    </ligand>
</feature>
<feature type="binding site" evidence="2">
    <location>
        <position position="120"/>
    </location>
    <ligand>
        <name>Mn(2+)</name>
        <dbReference type="ChEBI" id="CHEBI:29035"/>
        <label>1</label>
    </ligand>
</feature>
<feature type="binding site" evidence="2">
    <location>
        <position position="120"/>
    </location>
    <ligand>
        <name>Mn(2+)</name>
        <dbReference type="ChEBI" id="CHEBI:29035"/>
        <label>2</label>
    </ligand>
</feature>
<feature type="binding site" evidence="2">
    <location>
        <position position="121"/>
    </location>
    <ligand>
        <name>Mg(2+)</name>
        <dbReference type="ChEBI" id="CHEBI:18420"/>
        <label>2</label>
    </ligand>
</feature>
<feature type="binding site" evidence="2">
    <location>
        <position position="121"/>
    </location>
    <ligand>
        <name>Mn(2+)</name>
        <dbReference type="ChEBI" id="CHEBI:29035"/>
        <label>2</label>
    </ligand>
</feature>
<feature type="site" description="Substrate discrimination" evidence="3">
    <location>
        <position position="23"/>
    </location>
</feature>
<feature type="splice variant" id="VSP_046623" description="In isoform 2." evidence="12">
    <original>MPVARPEASDARVIAHVDMDCFYVQVEQRKQPELRGLPSAVVQYNEWQGGGLIAVSYEARKCGVKRSMRGDEAKAACPQIQLVQVPVARGKADLNLYRSAGSE</original>
    <variation>MRLKLLVLRFNWFKFLWLV</variation>
    <location>
        <begin position="1"/>
        <end position="103"/>
    </location>
</feature>
<feature type="splice variant" id="VSP_046624" description="In isoform 4." evidence="13">
    <original>QHWLNQLSEELSERLGSD</original>
    <variation>RVESQQCTSFPFAISCSS</variation>
    <location>
        <begin position="333"/>
        <end position="350"/>
    </location>
</feature>
<feature type="splice variant" id="VSP_046625" description="In isoform 4." evidence="13">
    <location>
        <begin position="351"/>
        <end position="672"/>
    </location>
</feature>
<feature type="splice variant" id="VSP_046626" description="In isoform 3." evidence="13">
    <original>G</original>
    <variation>E</variation>
    <location>
        <position position="442"/>
    </location>
</feature>
<feature type="splice variant" id="VSP_046627" description="In isoform 3." evidence="13">
    <location>
        <begin position="443"/>
        <end position="672"/>
    </location>
</feature>
<feature type="mutagenesis site" description="Loss of polymerase activity." evidence="5">
    <original>DEV</original>
    <variation>AAA</variation>
    <location>
        <begin position="120"/>
        <end position="122"/>
    </location>
</feature>
<feature type="sequence conflict" description="In Ref. 3; AAN39011." evidence="14" ref="3">
    <original>F</original>
    <variation>L</variation>
    <location>
        <position position="205"/>
    </location>
</feature>
<feature type="sequence conflict" description="In Ref. 3; AAN39011." evidence="14" ref="3">
    <original>F</original>
    <variation>V</variation>
    <location>
        <position position="412"/>
    </location>
</feature>
<name>POLH_ARATH</name>
<gene>
    <name type="primary">POLH</name>
    <name type="synonym">RAD30</name>
    <name type="ordered locus">At5g44740</name>
    <name type="ORF">K23L20.8</name>
    <name type="ORF">T19K24.15</name>
</gene>
<proteinExistence type="evidence at protein level"/>
<keyword id="KW-0025">Alternative splicing</keyword>
<keyword id="KW-0227">DNA damage</keyword>
<keyword id="KW-0234">DNA repair</keyword>
<keyword id="KW-0235">DNA replication</keyword>
<keyword id="KW-0237">DNA synthesis</keyword>
<keyword id="KW-0238">DNA-binding</keyword>
<keyword id="KW-0239">DNA-directed DNA polymerase</keyword>
<keyword id="KW-0460">Magnesium</keyword>
<keyword id="KW-0464">Manganese</keyword>
<keyword id="KW-0479">Metal-binding</keyword>
<keyword id="KW-0515">Mutator protein</keyword>
<keyword id="KW-0548">Nucleotidyltransferase</keyword>
<keyword id="KW-0539">Nucleus</keyword>
<keyword id="KW-1185">Reference proteome</keyword>
<keyword id="KW-0704">Schiff base</keyword>
<keyword id="KW-0808">Transferase</keyword>